<comment type="function">
    <text evidence="2 6">Stimulates the transcription of various genes by recognizing and binding to a CCAAT motif in promoters (By similarity). Promotes the expression of heat stress-inducible genes by contributing to the formation of a heat stress-specific transcriptional complex with NF-Y subunits (e.g. DPB3-1, NF-YA2 and NF-YB3) and DREB2A at the promoter of target genes, thus promoting heat tolerance (PubMed:25490919).</text>
</comment>
<comment type="subunit">
    <text evidence="1 6">Heterotrimeric transcription factor composed of three components, NF-YA, NF-YB and NF-YC (By similarity). NF-YB and NF-YC must interact and dimerize for NF-YA association and DNA binding (By similarity). Component of a heat stress-inducible transcriptional complex with NF-YA and NF-YB subunits made, at least, of NFYA2, NFYB3 and DPB3-1 in cooperation with DREB2A (PubMed:25490919).</text>
</comment>
<comment type="subcellular location">
    <subcellularLocation>
        <location evidence="6">Nucleus</location>
    </subcellularLocation>
</comment>
<comment type="tissue specificity">
    <text evidence="5 6 7">Ubiquitous (PubMed:11250072, PubMed:9662544). Expressed in seedlings, roots, petioles, hypocotyls, reproductive organ tissues and leaves (PubMed:25490919).</text>
</comment>
<comment type="developmental stage">
    <text evidence="6">In seedlings, first expressed in petioles and leaf blades of the cotyledons as well as tops and bottoms of the hypocotyls.</text>
</comment>
<comment type="similarity">
    <text evidence="3">Belongs to the NFYA/HAP2 subunit family.</text>
</comment>
<feature type="chain" id="PRO_0000198772" description="Nuclear transcription factor Y subunit A-2">
    <location>
        <begin position="1"/>
        <end position="295"/>
    </location>
</feature>
<feature type="DNA-binding region" description="NFYA/HAP2-type" evidence="3">
    <location>
        <begin position="173"/>
        <end position="198"/>
    </location>
</feature>
<feature type="region of interest" description="Disordered" evidence="4">
    <location>
        <begin position="178"/>
        <end position="244"/>
    </location>
</feature>
<feature type="short sequence motif" description="Subunit association domain (SAD)">
    <location>
        <begin position="139"/>
        <end position="165"/>
    </location>
</feature>
<feature type="compositionally biased region" description="Basic residues" evidence="4">
    <location>
        <begin position="178"/>
        <end position="189"/>
    </location>
</feature>
<feature type="compositionally biased region" description="Polar residues" evidence="4">
    <location>
        <begin position="197"/>
        <end position="209"/>
    </location>
</feature>
<feature type="compositionally biased region" description="Low complexity" evidence="4">
    <location>
        <begin position="216"/>
        <end position="233"/>
    </location>
</feature>
<feature type="sequence conflict" description="In Ref. 1; CAA74049." evidence="11" ref="1">
    <original>G</original>
    <variation>R</variation>
    <location>
        <position position="51"/>
    </location>
</feature>
<protein>
    <recommendedName>
        <fullName evidence="8 9">Nuclear transcription factor Y subunit A-2</fullName>
        <shortName evidence="8 9">AtNF-YA-2</shortName>
        <shortName evidence="10">AtNF-YA2</shortName>
    </recommendedName>
    <alternativeName>
        <fullName>Transcriptional activator HAP2B</fullName>
    </alternativeName>
</protein>
<dbReference type="EMBL" id="Y13721">
    <property type="protein sequence ID" value="CAA74049.1"/>
    <property type="molecule type" value="mRNA"/>
</dbReference>
<dbReference type="EMBL" id="AC011620">
    <property type="protein sequence ID" value="AAF26128.1"/>
    <property type="molecule type" value="Genomic_DNA"/>
</dbReference>
<dbReference type="EMBL" id="CP002686">
    <property type="protein sequence ID" value="AEE74280.1"/>
    <property type="molecule type" value="Genomic_DNA"/>
</dbReference>
<dbReference type="BioGRID" id="5073">
    <property type="interactions" value="17"/>
</dbReference>
<dbReference type="FunCoup" id="Q9M9X4">
    <property type="interactions" value="116"/>
</dbReference>
<dbReference type="IntAct" id="Q9M9X4">
    <property type="interactions" value="7"/>
</dbReference>
<dbReference type="STRING" id="3702.Q9M9X4"/>
<dbReference type="PaxDb" id="3702-AT3G05690.1"/>
<dbReference type="EnsemblPlants" id="AT3G05690.1">
    <property type="protein sequence ID" value="AT3G05690.1"/>
    <property type="gene ID" value="AT3G05690"/>
</dbReference>
<dbReference type="GeneID" id="819738"/>
<dbReference type="Gramene" id="AT3G05690.1">
    <property type="protein sequence ID" value="AT3G05690.1"/>
    <property type="gene ID" value="AT3G05690"/>
</dbReference>
<dbReference type="KEGG" id="ath:AT3G05690"/>
<dbReference type="Araport" id="AT3G05690"/>
<dbReference type="TAIR" id="AT3G05690">
    <property type="gene designation" value="NF-YA2"/>
</dbReference>
<dbReference type="eggNOG" id="KOG1561">
    <property type="taxonomic scope" value="Eukaryota"/>
</dbReference>
<dbReference type="HOGENOM" id="CLU_065504_0_0_1"/>
<dbReference type="InParanoid" id="Q9M9X4"/>
<dbReference type="PhylomeDB" id="Q9M9X4"/>
<dbReference type="PRO" id="PR:Q9M9X4"/>
<dbReference type="Proteomes" id="UP000006548">
    <property type="component" value="Chromosome 3"/>
</dbReference>
<dbReference type="ExpressionAtlas" id="Q9M9X4">
    <property type="expression patterns" value="baseline and differential"/>
</dbReference>
<dbReference type="GO" id="GO:0016602">
    <property type="term" value="C:CCAAT-binding factor complex"/>
    <property type="evidence" value="ECO:0000250"/>
    <property type="project" value="TAIR"/>
</dbReference>
<dbReference type="GO" id="GO:0005634">
    <property type="term" value="C:nucleus"/>
    <property type="evidence" value="ECO:0000314"/>
    <property type="project" value="UniProtKB"/>
</dbReference>
<dbReference type="GO" id="GO:0003677">
    <property type="term" value="F:DNA binding"/>
    <property type="evidence" value="ECO:0007669"/>
    <property type="project" value="UniProtKB-KW"/>
</dbReference>
<dbReference type="GO" id="GO:0003700">
    <property type="term" value="F:DNA-binding transcription factor activity"/>
    <property type="evidence" value="ECO:0000250"/>
    <property type="project" value="TAIR"/>
</dbReference>
<dbReference type="GO" id="GO:0009567">
    <property type="term" value="P:double fertilization forming a zygote and endosperm"/>
    <property type="evidence" value="ECO:0000315"/>
    <property type="project" value="TAIR"/>
</dbReference>
<dbReference type="GO" id="GO:0045893">
    <property type="term" value="P:positive regulation of DNA-templated transcription"/>
    <property type="evidence" value="ECO:0000314"/>
    <property type="project" value="UniProtKB"/>
</dbReference>
<dbReference type="GO" id="GO:0006355">
    <property type="term" value="P:regulation of DNA-templated transcription"/>
    <property type="evidence" value="ECO:0000250"/>
    <property type="project" value="TAIR"/>
</dbReference>
<dbReference type="GO" id="GO:0009408">
    <property type="term" value="P:response to heat"/>
    <property type="evidence" value="ECO:0000314"/>
    <property type="project" value="UniProtKB"/>
</dbReference>
<dbReference type="Gene3D" id="6.10.250.2430">
    <property type="match status" value="1"/>
</dbReference>
<dbReference type="InterPro" id="IPR001289">
    <property type="entry name" value="NFYA"/>
</dbReference>
<dbReference type="PANTHER" id="PTHR12632">
    <property type="entry name" value="TRANSCRIPTION FACTOR NF-Y ALPHA-RELATED"/>
    <property type="match status" value="1"/>
</dbReference>
<dbReference type="Pfam" id="PF02045">
    <property type="entry name" value="CBFB_NFYA"/>
    <property type="match status" value="1"/>
</dbReference>
<dbReference type="PRINTS" id="PR00616">
    <property type="entry name" value="CCAATSUBUNTB"/>
</dbReference>
<dbReference type="SMART" id="SM00521">
    <property type="entry name" value="CBF"/>
    <property type="match status" value="1"/>
</dbReference>
<dbReference type="PROSITE" id="PS51152">
    <property type="entry name" value="NFYA_HAP2_2"/>
    <property type="match status" value="1"/>
</dbReference>
<organism>
    <name type="scientific">Arabidopsis thaliana</name>
    <name type="common">Mouse-ear cress</name>
    <dbReference type="NCBI Taxonomy" id="3702"/>
    <lineage>
        <taxon>Eukaryota</taxon>
        <taxon>Viridiplantae</taxon>
        <taxon>Streptophyta</taxon>
        <taxon>Embryophyta</taxon>
        <taxon>Tracheophyta</taxon>
        <taxon>Spermatophyta</taxon>
        <taxon>Magnoliopsida</taxon>
        <taxon>eudicotyledons</taxon>
        <taxon>Gunneridae</taxon>
        <taxon>Pentapetalae</taxon>
        <taxon>rosids</taxon>
        <taxon>malvids</taxon>
        <taxon>Brassicales</taxon>
        <taxon>Brassicaceae</taxon>
        <taxon>Camelineae</taxon>
        <taxon>Arabidopsis</taxon>
    </lineage>
</organism>
<gene>
    <name evidence="8 9" type="primary">NFYA2</name>
    <name type="synonym">HAP2B</name>
    <name evidence="12" type="ordered locus">At3g05690</name>
    <name evidence="13" type="ORF">F18C1.4</name>
</gene>
<keyword id="KW-0010">Activator</keyword>
<keyword id="KW-0238">DNA-binding</keyword>
<keyword id="KW-0539">Nucleus</keyword>
<keyword id="KW-1185">Reference proteome</keyword>
<keyword id="KW-0804">Transcription</keyword>
<keyword id="KW-0805">Transcription regulation</keyword>
<name>NFYA2_ARATH</name>
<proteinExistence type="evidence at protein level"/>
<sequence length="295" mass="32139">MAMQTVREGLFSAPQTSWWTAFGSQPLAPESLAGDSDSFAGVKVGSVGETGQRVDKQSNSATHLAFSLGDVKSPRLVPKPHGATFSMQSPCLELGFSQPPIYTKYPYGEQQYYGVVSAYGSQSRVMLPLNMETEDSTIYVNSKQYHGIIRRRQSRAKAAAVLDQKKLSSRCRKPYMHHSRHLHALRRPRGSGGRFLNTKSQNLENSGTNAKKGDGSMQIQSQPKPQQSNSQNSEVVHPENGTMNLSNGLNVSGSEVTSMNYFLSSPVHSLGGMVMPSKWIAAAAAMDNGCCNFKT</sequence>
<accession>Q9M9X4</accession>
<accession>O23631</accession>
<evidence type="ECO:0000250" key="1">
    <source>
        <dbReference type="UniProtKB" id="P23511"/>
    </source>
</evidence>
<evidence type="ECO:0000250" key="2">
    <source>
        <dbReference type="UniProtKB" id="Q9SFD8"/>
    </source>
</evidence>
<evidence type="ECO:0000255" key="3">
    <source>
        <dbReference type="PROSITE-ProRule" id="PRU00966"/>
    </source>
</evidence>
<evidence type="ECO:0000256" key="4">
    <source>
        <dbReference type="SAM" id="MobiDB-lite"/>
    </source>
</evidence>
<evidence type="ECO:0000269" key="5">
    <source>
    </source>
</evidence>
<evidence type="ECO:0000269" key="6">
    <source>
    </source>
</evidence>
<evidence type="ECO:0000269" key="7">
    <source>
    </source>
</evidence>
<evidence type="ECO:0000303" key="8">
    <source>
    </source>
</evidence>
<evidence type="ECO:0000303" key="9">
    <source>
    </source>
</evidence>
<evidence type="ECO:0000303" key="10">
    <source>
    </source>
</evidence>
<evidence type="ECO:0000305" key="11"/>
<evidence type="ECO:0000312" key="12">
    <source>
        <dbReference type="Araport" id="AT3G05690"/>
    </source>
</evidence>
<evidence type="ECO:0000312" key="13">
    <source>
        <dbReference type="EMBL" id="AAF26128.1"/>
    </source>
</evidence>
<reference key="1">
    <citation type="journal article" date="1998" name="Plant Physiol.">
        <title>Multiple genes encoding the conserved CCAAT-box transcription factor complex are expressed in Arabidopsis.</title>
        <authorList>
            <person name="Edwards D."/>
            <person name="Murray J.A.H."/>
            <person name="Smith A.G."/>
        </authorList>
    </citation>
    <scope>NUCLEOTIDE SEQUENCE [MRNA]</scope>
    <scope>TISSUE SPECIFICITY</scope>
</reference>
<reference key="2">
    <citation type="journal article" date="2000" name="Nature">
        <title>Sequence and analysis of chromosome 3 of the plant Arabidopsis thaliana.</title>
        <authorList>
            <person name="Salanoubat M."/>
            <person name="Lemcke K."/>
            <person name="Rieger M."/>
            <person name="Ansorge W."/>
            <person name="Unseld M."/>
            <person name="Fartmann B."/>
            <person name="Valle G."/>
            <person name="Bloecker H."/>
            <person name="Perez-Alonso M."/>
            <person name="Obermaier B."/>
            <person name="Delseny M."/>
            <person name="Boutry M."/>
            <person name="Grivell L.A."/>
            <person name="Mache R."/>
            <person name="Puigdomenech P."/>
            <person name="De Simone V."/>
            <person name="Choisne N."/>
            <person name="Artiguenave F."/>
            <person name="Robert C."/>
            <person name="Brottier P."/>
            <person name="Wincker P."/>
            <person name="Cattolico L."/>
            <person name="Weissenbach J."/>
            <person name="Saurin W."/>
            <person name="Quetier F."/>
            <person name="Schaefer M."/>
            <person name="Mueller-Auer S."/>
            <person name="Gabel C."/>
            <person name="Fuchs M."/>
            <person name="Benes V."/>
            <person name="Wurmbach E."/>
            <person name="Drzonek H."/>
            <person name="Erfle H."/>
            <person name="Jordan N."/>
            <person name="Bangert S."/>
            <person name="Wiedelmann R."/>
            <person name="Kranz H."/>
            <person name="Voss H."/>
            <person name="Holland R."/>
            <person name="Brandt P."/>
            <person name="Nyakatura G."/>
            <person name="Vezzi A."/>
            <person name="D'Angelo M."/>
            <person name="Pallavicini A."/>
            <person name="Toppo S."/>
            <person name="Simionati B."/>
            <person name="Conrad A."/>
            <person name="Hornischer K."/>
            <person name="Kauer G."/>
            <person name="Loehnert T.-H."/>
            <person name="Nordsiek G."/>
            <person name="Reichelt J."/>
            <person name="Scharfe M."/>
            <person name="Schoen O."/>
            <person name="Bargues M."/>
            <person name="Terol J."/>
            <person name="Climent J."/>
            <person name="Navarro P."/>
            <person name="Collado C."/>
            <person name="Perez-Perez A."/>
            <person name="Ottenwaelder B."/>
            <person name="Duchemin D."/>
            <person name="Cooke R."/>
            <person name="Laudie M."/>
            <person name="Berger-Llauro C."/>
            <person name="Purnelle B."/>
            <person name="Masuy D."/>
            <person name="de Haan M."/>
            <person name="Maarse A.C."/>
            <person name="Alcaraz J.-P."/>
            <person name="Cottet A."/>
            <person name="Casacuberta E."/>
            <person name="Monfort A."/>
            <person name="Argiriou A."/>
            <person name="Flores M."/>
            <person name="Liguori R."/>
            <person name="Vitale D."/>
            <person name="Mannhaupt G."/>
            <person name="Haase D."/>
            <person name="Schoof H."/>
            <person name="Rudd S."/>
            <person name="Zaccaria P."/>
            <person name="Mewes H.-W."/>
            <person name="Mayer K.F.X."/>
            <person name="Kaul S."/>
            <person name="Town C.D."/>
            <person name="Koo H.L."/>
            <person name="Tallon L.J."/>
            <person name="Jenkins J."/>
            <person name="Rooney T."/>
            <person name="Rizzo M."/>
            <person name="Walts A."/>
            <person name="Utterback T."/>
            <person name="Fujii C.Y."/>
            <person name="Shea T.P."/>
            <person name="Creasy T.H."/>
            <person name="Haas B."/>
            <person name="Maiti R."/>
            <person name="Wu D."/>
            <person name="Peterson J."/>
            <person name="Van Aken S."/>
            <person name="Pai G."/>
            <person name="Militscher J."/>
            <person name="Sellers P."/>
            <person name="Gill J.E."/>
            <person name="Feldblyum T.V."/>
            <person name="Preuss D."/>
            <person name="Lin X."/>
            <person name="Nierman W.C."/>
            <person name="Salzberg S.L."/>
            <person name="White O."/>
            <person name="Venter J.C."/>
            <person name="Fraser C.M."/>
            <person name="Kaneko T."/>
            <person name="Nakamura Y."/>
            <person name="Sato S."/>
            <person name="Kato T."/>
            <person name="Asamizu E."/>
            <person name="Sasamoto S."/>
            <person name="Kimura T."/>
            <person name="Idesawa K."/>
            <person name="Kawashima K."/>
            <person name="Kishida Y."/>
            <person name="Kiyokawa C."/>
            <person name="Kohara M."/>
            <person name="Matsumoto M."/>
            <person name="Matsuno A."/>
            <person name="Muraki A."/>
            <person name="Nakayama S."/>
            <person name="Nakazaki N."/>
            <person name="Shinpo S."/>
            <person name="Takeuchi C."/>
            <person name="Wada T."/>
            <person name="Watanabe A."/>
            <person name="Yamada M."/>
            <person name="Yasuda M."/>
            <person name="Tabata S."/>
        </authorList>
    </citation>
    <scope>NUCLEOTIDE SEQUENCE [LARGE SCALE GENOMIC DNA]</scope>
    <source>
        <strain>cv. Columbia</strain>
    </source>
</reference>
<reference key="3">
    <citation type="journal article" date="2017" name="Plant J.">
        <title>Araport11: a complete reannotation of the Arabidopsis thaliana reference genome.</title>
        <authorList>
            <person name="Cheng C.Y."/>
            <person name="Krishnakumar V."/>
            <person name="Chan A.P."/>
            <person name="Thibaud-Nissen F."/>
            <person name="Schobel S."/>
            <person name="Town C.D."/>
        </authorList>
    </citation>
    <scope>GENOME REANNOTATION</scope>
    <source>
        <strain>cv. Columbia</strain>
    </source>
</reference>
<reference key="4">
    <citation type="journal article" date="2001" name="Gene">
        <title>Regulation of the CCAAT-binding NF-Y subunits in Arabidopsis thaliana.</title>
        <authorList>
            <person name="Gusmaroli G."/>
            <person name="Tonelli C."/>
            <person name="Mantovani R."/>
        </authorList>
    </citation>
    <scope>TISSUE SPECIFICITY</scope>
</reference>
<reference key="5">
    <citation type="journal article" date="2002" name="Gene">
        <title>Regulation of novel members of the Arabidopsis thaliana CCAAT-binding nuclear factor Y subunits.</title>
        <authorList>
            <person name="Gusmaroli G."/>
            <person name="Tonelli C."/>
            <person name="Mantovani R."/>
        </authorList>
    </citation>
    <scope>GENE FAMILY</scope>
    <scope>NOMENCLATURE</scope>
</reference>
<reference key="6">
    <citation type="journal article" date="2014" name="Plant Cell">
        <title>Arabidopsis DPB3-1, a DREB2A interactor, specifically enhances heat stress-induced gene expression by forming a heat stress-specific transcriptional complex with NF-Y subunits.</title>
        <authorList>
            <person name="Sato H."/>
            <person name="Mizoi J."/>
            <person name="Tanaka H."/>
            <person name="Maruyama K."/>
            <person name="Qin F."/>
            <person name="Osakabe Y."/>
            <person name="Morimoto K."/>
            <person name="Ohori T."/>
            <person name="Kusakabe K."/>
            <person name="Nagata M."/>
            <person name="Shinozaki K."/>
            <person name="Yamaguchi-Shinozaki K."/>
        </authorList>
    </citation>
    <scope>FUNCTION</scope>
    <scope>SUBUNIT</scope>
    <scope>SUBCELLULAR LOCATION</scope>
    <scope>TISSUE SPECIFICITY</scope>
    <scope>DEVELOPMENTAL STAGE</scope>
    <source>
        <strain>cv. Columbia</strain>
    </source>
</reference>
<reference key="7">
    <citation type="journal article" date="2016" name="Front. Plant Sci.">
        <title>The Arabidopsis thaliana Nuclear Factor Y Transcription Factors.</title>
        <authorList>
            <person name="Zhao H."/>
            <person name="Wu D."/>
            <person name="Kong F."/>
            <person name="Lin K."/>
            <person name="Zhang H."/>
            <person name="Li G."/>
        </authorList>
    </citation>
    <scope>REVIEW</scope>
</reference>